<proteinExistence type="inferred from homology"/>
<feature type="chain" id="PRO_1000095023" description="33 kDa chaperonin">
    <location>
        <begin position="1"/>
        <end position="302"/>
    </location>
</feature>
<feature type="disulfide bond" description="Redox-active" evidence="1">
    <location>
        <begin position="234"/>
        <end position="236"/>
    </location>
</feature>
<feature type="disulfide bond" description="Redox-active" evidence="1">
    <location>
        <begin position="267"/>
        <end position="270"/>
    </location>
</feature>
<evidence type="ECO:0000255" key="1">
    <source>
        <dbReference type="HAMAP-Rule" id="MF_00117"/>
    </source>
</evidence>
<protein>
    <recommendedName>
        <fullName evidence="1">33 kDa chaperonin</fullName>
    </recommendedName>
    <alternativeName>
        <fullName evidence="1">Heat shock protein 33 homolog</fullName>
        <shortName evidence="1">HSP33</shortName>
    </alternativeName>
</protein>
<organism>
    <name type="scientific">Neisseria gonorrhoeae (strain NCCP11945)</name>
    <dbReference type="NCBI Taxonomy" id="521006"/>
    <lineage>
        <taxon>Bacteria</taxon>
        <taxon>Pseudomonadati</taxon>
        <taxon>Pseudomonadota</taxon>
        <taxon>Betaproteobacteria</taxon>
        <taxon>Neisseriales</taxon>
        <taxon>Neisseriaceae</taxon>
        <taxon>Neisseria</taxon>
    </lineage>
</organism>
<gene>
    <name evidence="1" type="primary">hslO</name>
    <name type="ordered locus">NGK_1976</name>
</gene>
<accession>B4RJC9</accession>
<dbReference type="EMBL" id="CP001050">
    <property type="protein sequence ID" value="ACF30594.1"/>
    <property type="molecule type" value="Genomic_DNA"/>
</dbReference>
<dbReference type="RefSeq" id="WP_010358617.1">
    <property type="nucleotide sequence ID" value="NC_011035.1"/>
</dbReference>
<dbReference type="SMR" id="B4RJC9"/>
<dbReference type="GeneID" id="66753909"/>
<dbReference type="KEGG" id="ngk:NGK_1976"/>
<dbReference type="HOGENOM" id="CLU_054493_0_0_4"/>
<dbReference type="Proteomes" id="UP000002564">
    <property type="component" value="Chromosome"/>
</dbReference>
<dbReference type="GO" id="GO:0005737">
    <property type="term" value="C:cytoplasm"/>
    <property type="evidence" value="ECO:0007669"/>
    <property type="project" value="UniProtKB-SubCell"/>
</dbReference>
<dbReference type="GO" id="GO:0044183">
    <property type="term" value="F:protein folding chaperone"/>
    <property type="evidence" value="ECO:0007669"/>
    <property type="project" value="TreeGrafter"/>
</dbReference>
<dbReference type="GO" id="GO:0051082">
    <property type="term" value="F:unfolded protein binding"/>
    <property type="evidence" value="ECO:0007669"/>
    <property type="project" value="UniProtKB-UniRule"/>
</dbReference>
<dbReference type="GO" id="GO:0042026">
    <property type="term" value="P:protein refolding"/>
    <property type="evidence" value="ECO:0007669"/>
    <property type="project" value="TreeGrafter"/>
</dbReference>
<dbReference type="CDD" id="cd00498">
    <property type="entry name" value="Hsp33"/>
    <property type="match status" value="1"/>
</dbReference>
<dbReference type="Gene3D" id="1.10.287.480">
    <property type="entry name" value="helix hairpin bin"/>
    <property type="match status" value="1"/>
</dbReference>
<dbReference type="Gene3D" id="3.55.30.10">
    <property type="entry name" value="Hsp33 domain"/>
    <property type="match status" value="1"/>
</dbReference>
<dbReference type="Gene3D" id="3.90.1280.10">
    <property type="entry name" value="HSP33 redox switch-like"/>
    <property type="match status" value="1"/>
</dbReference>
<dbReference type="HAMAP" id="MF_00117">
    <property type="entry name" value="HslO"/>
    <property type="match status" value="1"/>
</dbReference>
<dbReference type="InterPro" id="IPR000397">
    <property type="entry name" value="Heat_shock_Hsp33"/>
</dbReference>
<dbReference type="InterPro" id="IPR016154">
    <property type="entry name" value="Heat_shock_Hsp33_C"/>
</dbReference>
<dbReference type="InterPro" id="IPR016153">
    <property type="entry name" value="Heat_shock_Hsp33_N"/>
</dbReference>
<dbReference type="InterPro" id="IPR023212">
    <property type="entry name" value="Hsp33_helix_hairpin_bin_dom_sf"/>
</dbReference>
<dbReference type="NCBIfam" id="NF001033">
    <property type="entry name" value="PRK00114.1"/>
    <property type="match status" value="1"/>
</dbReference>
<dbReference type="PANTHER" id="PTHR30111">
    <property type="entry name" value="33 KDA CHAPERONIN"/>
    <property type="match status" value="1"/>
</dbReference>
<dbReference type="PANTHER" id="PTHR30111:SF1">
    <property type="entry name" value="33 KDA CHAPERONIN"/>
    <property type="match status" value="1"/>
</dbReference>
<dbReference type="Pfam" id="PF01430">
    <property type="entry name" value="HSP33"/>
    <property type="match status" value="1"/>
</dbReference>
<dbReference type="PIRSF" id="PIRSF005261">
    <property type="entry name" value="Heat_shock_Hsp33"/>
    <property type="match status" value="1"/>
</dbReference>
<dbReference type="SUPFAM" id="SSF64397">
    <property type="entry name" value="Hsp33 domain"/>
    <property type="match status" value="1"/>
</dbReference>
<dbReference type="SUPFAM" id="SSF118352">
    <property type="entry name" value="HSP33 redox switch-like"/>
    <property type="match status" value="1"/>
</dbReference>
<sequence>MNQTAINRADARTRFIFDDMPVRGLHVRLENVWQHIVKQKNYPAAIRCALGELLAAGVLLSGNLKNEGTLIVQVQGQGKLKMLVAEATSDRTVRATARWDETAEIADDESLGDLLGGNGVFVLTLQPKDGEPWQGVVPLEGGSIAQMLVNYMKRSEQLDTHIALSASDEAAGGLLVQRLPEEVLDEEAWEHVSTLARTLTAEELAELDAQHVLYRLFHETPPRVFEPETFESSCTCSRGKVSDMLLMLGGEEVGGVVAEQGSIEVDCDFCHSKYVFDETDVNALFGEDVVGVAKGLPRHTVQ</sequence>
<name>HSLO_NEIG2</name>
<keyword id="KW-0143">Chaperone</keyword>
<keyword id="KW-0963">Cytoplasm</keyword>
<keyword id="KW-1015">Disulfide bond</keyword>
<keyword id="KW-0676">Redox-active center</keyword>
<keyword id="KW-0862">Zinc</keyword>
<reference key="1">
    <citation type="journal article" date="2008" name="J. Bacteriol.">
        <title>Complete genome sequence of Neisseria gonorrhoeae NCCP11945.</title>
        <authorList>
            <person name="Chung G.T."/>
            <person name="Yoo J.S."/>
            <person name="Oh H.B."/>
            <person name="Lee Y.S."/>
            <person name="Cha S.H."/>
            <person name="Kim S.J."/>
            <person name="Yoo C.K."/>
        </authorList>
    </citation>
    <scope>NUCLEOTIDE SEQUENCE [LARGE SCALE GENOMIC DNA]</scope>
    <source>
        <strain>NCCP11945</strain>
    </source>
</reference>
<comment type="function">
    <text evidence="1">Redox regulated molecular chaperone. Protects both thermally unfolding and oxidatively damaged proteins from irreversible aggregation. Plays an important role in the bacterial defense system toward oxidative stress.</text>
</comment>
<comment type="subcellular location">
    <subcellularLocation>
        <location evidence="1">Cytoplasm</location>
    </subcellularLocation>
</comment>
<comment type="PTM">
    <text evidence="1">Under oxidizing conditions two disulfide bonds are formed involving the reactive cysteines. Under reducing conditions zinc is bound to the reactive cysteines and the protein is inactive.</text>
</comment>
<comment type="similarity">
    <text evidence="1">Belongs to the HSP33 family.</text>
</comment>